<protein>
    <recommendedName>
        <fullName>Transcriptional regulator MraZ</fullName>
    </recommendedName>
</protein>
<name>MRAZ_ECODH</name>
<gene>
    <name evidence="1" type="primary">mraZ</name>
    <name type="ordered locus">ECDH10B_0063</name>
</gene>
<reference key="1">
    <citation type="journal article" date="2008" name="J. Bacteriol.">
        <title>The complete genome sequence of Escherichia coli DH10B: insights into the biology of a laboratory workhorse.</title>
        <authorList>
            <person name="Durfee T."/>
            <person name="Nelson R."/>
            <person name="Baldwin S."/>
            <person name="Plunkett G. III"/>
            <person name="Burland V."/>
            <person name="Mau B."/>
            <person name="Petrosino J.F."/>
            <person name="Qin X."/>
            <person name="Muzny D.M."/>
            <person name="Ayele M."/>
            <person name="Gibbs R.A."/>
            <person name="Csorgo B."/>
            <person name="Posfai G."/>
            <person name="Weinstock G.M."/>
            <person name="Blattner F.R."/>
        </authorList>
    </citation>
    <scope>NUCLEOTIDE SEQUENCE [LARGE SCALE GENOMIC DNA]</scope>
    <source>
        <strain>K12 / DH10B</strain>
    </source>
</reference>
<proteinExistence type="inferred from homology"/>
<keyword id="KW-0963">Cytoplasm</keyword>
<keyword id="KW-0238">DNA-binding</keyword>
<keyword id="KW-0677">Repeat</keyword>
<keyword id="KW-0678">Repressor</keyword>
<keyword id="KW-0804">Transcription</keyword>
<keyword id="KW-0805">Transcription regulation</keyword>
<accession>B1XC58</accession>
<sequence>MFRGATLVNLDSKGRLSVPTRYREQLLENAAGQMVCTIDIHHPCLLLYPLPEWEIIEQKLSRLSSMNPVERRVQRLLLGHASECQMDGAGRLLIAPVLRQHAGLTKEVMLVGQFNKFELWDETTWHQQVKEDIDAEQLATGDLSERLQDLSL</sequence>
<evidence type="ECO:0000255" key="1">
    <source>
        <dbReference type="HAMAP-Rule" id="MF_01008"/>
    </source>
</evidence>
<evidence type="ECO:0000255" key="2">
    <source>
        <dbReference type="PROSITE-ProRule" id="PRU01076"/>
    </source>
</evidence>
<dbReference type="EMBL" id="CP000948">
    <property type="protein sequence ID" value="ACB01262.1"/>
    <property type="molecule type" value="Genomic_DNA"/>
</dbReference>
<dbReference type="RefSeq" id="WP_001295770.1">
    <property type="nucleotide sequence ID" value="NC_010473.1"/>
</dbReference>
<dbReference type="SMR" id="B1XC58"/>
<dbReference type="GeneID" id="75202102"/>
<dbReference type="KEGG" id="ecd:ECDH10B_0063"/>
<dbReference type="HOGENOM" id="CLU_107907_2_0_6"/>
<dbReference type="GO" id="GO:0005737">
    <property type="term" value="C:cytoplasm"/>
    <property type="evidence" value="ECO:0007669"/>
    <property type="project" value="UniProtKB-UniRule"/>
</dbReference>
<dbReference type="GO" id="GO:0009295">
    <property type="term" value="C:nucleoid"/>
    <property type="evidence" value="ECO:0007669"/>
    <property type="project" value="UniProtKB-SubCell"/>
</dbReference>
<dbReference type="GO" id="GO:0003700">
    <property type="term" value="F:DNA-binding transcription factor activity"/>
    <property type="evidence" value="ECO:0007669"/>
    <property type="project" value="UniProtKB-UniRule"/>
</dbReference>
<dbReference type="GO" id="GO:0000976">
    <property type="term" value="F:transcription cis-regulatory region binding"/>
    <property type="evidence" value="ECO:0007669"/>
    <property type="project" value="TreeGrafter"/>
</dbReference>
<dbReference type="GO" id="GO:2000143">
    <property type="term" value="P:negative regulation of DNA-templated transcription initiation"/>
    <property type="evidence" value="ECO:0007669"/>
    <property type="project" value="TreeGrafter"/>
</dbReference>
<dbReference type="CDD" id="cd16321">
    <property type="entry name" value="MraZ_C"/>
    <property type="match status" value="1"/>
</dbReference>
<dbReference type="CDD" id="cd16320">
    <property type="entry name" value="MraZ_N"/>
    <property type="match status" value="1"/>
</dbReference>
<dbReference type="FunFam" id="3.40.1550.20:FF:000001">
    <property type="entry name" value="Transcriptional regulator MraZ"/>
    <property type="match status" value="1"/>
</dbReference>
<dbReference type="Gene3D" id="3.40.1550.20">
    <property type="entry name" value="Transcriptional regulator MraZ domain"/>
    <property type="match status" value="1"/>
</dbReference>
<dbReference type="HAMAP" id="MF_01008">
    <property type="entry name" value="MraZ"/>
    <property type="match status" value="1"/>
</dbReference>
<dbReference type="InterPro" id="IPR003444">
    <property type="entry name" value="MraZ"/>
</dbReference>
<dbReference type="InterPro" id="IPR035644">
    <property type="entry name" value="MraZ_C"/>
</dbReference>
<dbReference type="InterPro" id="IPR020603">
    <property type="entry name" value="MraZ_dom"/>
</dbReference>
<dbReference type="InterPro" id="IPR035642">
    <property type="entry name" value="MraZ_N"/>
</dbReference>
<dbReference type="InterPro" id="IPR038619">
    <property type="entry name" value="MraZ_sf"/>
</dbReference>
<dbReference type="InterPro" id="IPR007159">
    <property type="entry name" value="SpoVT-AbrB_dom"/>
</dbReference>
<dbReference type="InterPro" id="IPR037914">
    <property type="entry name" value="SpoVT-AbrB_sf"/>
</dbReference>
<dbReference type="NCBIfam" id="TIGR00242">
    <property type="entry name" value="division/cell wall cluster transcriptional repressor MraZ"/>
    <property type="match status" value="1"/>
</dbReference>
<dbReference type="PANTHER" id="PTHR34701">
    <property type="entry name" value="TRANSCRIPTIONAL REGULATOR MRAZ"/>
    <property type="match status" value="1"/>
</dbReference>
<dbReference type="PANTHER" id="PTHR34701:SF1">
    <property type="entry name" value="TRANSCRIPTIONAL REGULATOR MRAZ"/>
    <property type="match status" value="1"/>
</dbReference>
<dbReference type="Pfam" id="PF02381">
    <property type="entry name" value="MraZ"/>
    <property type="match status" value="2"/>
</dbReference>
<dbReference type="SUPFAM" id="SSF89447">
    <property type="entry name" value="AbrB/MazE/MraZ-like"/>
    <property type="match status" value="1"/>
</dbReference>
<dbReference type="PROSITE" id="PS51740">
    <property type="entry name" value="SPOVT_ABRB"/>
    <property type="match status" value="2"/>
</dbReference>
<feature type="chain" id="PRO_1000134793" description="Transcriptional regulator MraZ">
    <location>
        <begin position="1"/>
        <end position="152"/>
    </location>
</feature>
<feature type="domain" description="SpoVT-AbrB 1" evidence="2">
    <location>
        <begin position="5"/>
        <end position="52"/>
    </location>
</feature>
<feature type="domain" description="SpoVT-AbrB 2" evidence="2">
    <location>
        <begin position="81"/>
        <end position="124"/>
    </location>
</feature>
<organism>
    <name type="scientific">Escherichia coli (strain K12 / DH10B)</name>
    <dbReference type="NCBI Taxonomy" id="316385"/>
    <lineage>
        <taxon>Bacteria</taxon>
        <taxon>Pseudomonadati</taxon>
        <taxon>Pseudomonadota</taxon>
        <taxon>Gammaproteobacteria</taxon>
        <taxon>Enterobacterales</taxon>
        <taxon>Enterobacteriaceae</taxon>
        <taxon>Escherichia</taxon>
    </lineage>
</organism>
<comment type="function">
    <text evidence="1">Negatively regulates its own expression and that of the subsequent genes in the proximal part of the division and cell wall (dcw) gene cluster. Acts by binding directly to DNA. May also regulate the expression of genes outside the dcw cluster.</text>
</comment>
<comment type="subunit">
    <text evidence="1">Forms oligomers.</text>
</comment>
<comment type="subcellular location">
    <subcellularLocation>
        <location evidence="1">Cytoplasm</location>
        <location evidence="1">Nucleoid</location>
    </subcellularLocation>
</comment>
<comment type="similarity">
    <text evidence="1">Belongs to the MraZ family.</text>
</comment>